<name>AROA_BACCN</name>
<sequence length="424" mass="45228">MANIRREKGLNGTIAIPGDKSISHRAVMFGAIAEGTTKVSNFLLGEDCLSTIACFRKLGVKIDQSGNDVTIYGKGLTGLQEPKEVLDVGNSGTTIRLMLGILANVPFHCTIIGDDSIGKRPMKRVTDPLREMNAQIDGREDGQYTPLSIRGGNIKGIHYDSPVASAQVKSAILLAGLKGEGVTTVTEPLQSRDHTERMLRAFGCTVEVTGQTVSLRGGQSLIGTEIEVPGDISSAAFFLVAGAIVPNSKIVLKNVGLNPTRTGIIDVLQKMGAILSVDHVRNEEFEPCGDITIETSKLQGIEIGGSLIPRLIDEIPIIALLATQATGTTVIKDAEELKVKETNRIDTVVQELKKLGVKIEATSDGMIIYGNQKLQGGIVDSHGDHRIGMMLAIASCIADGEVEIQRSDAVSVSYPNFFDQLASL</sequence>
<dbReference type="EC" id="2.5.1.19" evidence="1"/>
<dbReference type="EMBL" id="CP000764">
    <property type="protein sequence ID" value="ABS21564.1"/>
    <property type="molecule type" value="Genomic_DNA"/>
</dbReference>
<dbReference type="RefSeq" id="WP_011984315.1">
    <property type="nucleotide sequence ID" value="NC_009674.1"/>
</dbReference>
<dbReference type="SMR" id="A7GN56"/>
<dbReference type="STRING" id="315749.Bcer98_1242"/>
<dbReference type="GeneID" id="33896591"/>
<dbReference type="KEGG" id="bcy:Bcer98_1242"/>
<dbReference type="eggNOG" id="COG0128">
    <property type="taxonomic scope" value="Bacteria"/>
</dbReference>
<dbReference type="HOGENOM" id="CLU_024321_0_1_9"/>
<dbReference type="OrthoDB" id="9809920at2"/>
<dbReference type="UniPathway" id="UPA00053">
    <property type="reaction ID" value="UER00089"/>
</dbReference>
<dbReference type="Proteomes" id="UP000002300">
    <property type="component" value="Chromosome"/>
</dbReference>
<dbReference type="GO" id="GO:0005737">
    <property type="term" value="C:cytoplasm"/>
    <property type="evidence" value="ECO:0007669"/>
    <property type="project" value="UniProtKB-SubCell"/>
</dbReference>
<dbReference type="GO" id="GO:0003866">
    <property type="term" value="F:3-phosphoshikimate 1-carboxyvinyltransferase activity"/>
    <property type="evidence" value="ECO:0007669"/>
    <property type="project" value="UniProtKB-UniRule"/>
</dbReference>
<dbReference type="GO" id="GO:0008652">
    <property type="term" value="P:amino acid biosynthetic process"/>
    <property type="evidence" value="ECO:0007669"/>
    <property type="project" value="UniProtKB-KW"/>
</dbReference>
<dbReference type="GO" id="GO:0009073">
    <property type="term" value="P:aromatic amino acid family biosynthetic process"/>
    <property type="evidence" value="ECO:0007669"/>
    <property type="project" value="UniProtKB-KW"/>
</dbReference>
<dbReference type="GO" id="GO:0009423">
    <property type="term" value="P:chorismate biosynthetic process"/>
    <property type="evidence" value="ECO:0007669"/>
    <property type="project" value="UniProtKB-UniRule"/>
</dbReference>
<dbReference type="CDD" id="cd01556">
    <property type="entry name" value="EPSP_synthase"/>
    <property type="match status" value="1"/>
</dbReference>
<dbReference type="FunFam" id="3.65.10.10:FF:000005">
    <property type="entry name" value="3-phosphoshikimate 1-carboxyvinyltransferase"/>
    <property type="match status" value="1"/>
</dbReference>
<dbReference type="FunFam" id="3.65.10.10:FF:000006">
    <property type="entry name" value="3-phosphoshikimate 1-carboxyvinyltransferase"/>
    <property type="match status" value="1"/>
</dbReference>
<dbReference type="Gene3D" id="3.65.10.10">
    <property type="entry name" value="Enolpyruvate transferase domain"/>
    <property type="match status" value="2"/>
</dbReference>
<dbReference type="HAMAP" id="MF_00210">
    <property type="entry name" value="EPSP_synth"/>
    <property type="match status" value="1"/>
</dbReference>
<dbReference type="InterPro" id="IPR001986">
    <property type="entry name" value="Enolpyruvate_Tfrase_dom"/>
</dbReference>
<dbReference type="InterPro" id="IPR036968">
    <property type="entry name" value="Enolpyruvate_Tfrase_sf"/>
</dbReference>
<dbReference type="InterPro" id="IPR006264">
    <property type="entry name" value="EPSP_synthase"/>
</dbReference>
<dbReference type="InterPro" id="IPR023193">
    <property type="entry name" value="EPSP_synthase_CS"/>
</dbReference>
<dbReference type="InterPro" id="IPR013792">
    <property type="entry name" value="RNA3'P_cycl/enolpyr_Trfase_a/b"/>
</dbReference>
<dbReference type="NCBIfam" id="TIGR01356">
    <property type="entry name" value="aroA"/>
    <property type="match status" value="1"/>
</dbReference>
<dbReference type="PANTHER" id="PTHR21090">
    <property type="entry name" value="AROM/DEHYDROQUINATE SYNTHASE"/>
    <property type="match status" value="1"/>
</dbReference>
<dbReference type="PANTHER" id="PTHR21090:SF5">
    <property type="entry name" value="PENTAFUNCTIONAL AROM POLYPEPTIDE"/>
    <property type="match status" value="1"/>
</dbReference>
<dbReference type="Pfam" id="PF00275">
    <property type="entry name" value="EPSP_synthase"/>
    <property type="match status" value="1"/>
</dbReference>
<dbReference type="PIRSF" id="PIRSF000505">
    <property type="entry name" value="EPSPS"/>
    <property type="match status" value="1"/>
</dbReference>
<dbReference type="SUPFAM" id="SSF55205">
    <property type="entry name" value="EPT/RTPC-like"/>
    <property type="match status" value="1"/>
</dbReference>
<dbReference type="PROSITE" id="PS00104">
    <property type="entry name" value="EPSP_SYNTHASE_1"/>
    <property type="match status" value="1"/>
</dbReference>
<dbReference type="PROSITE" id="PS00885">
    <property type="entry name" value="EPSP_SYNTHASE_2"/>
    <property type="match status" value="1"/>
</dbReference>
<reference key="1">
    <citation type="journal article" date="2008" name="Chem. Biol. Interact.">
        <title>Extending the Bacillus cereus group genomics to putative food-borne pathogens of different toxicity.</title>
        <authorList>
            <person name="Lapidus A."/>
            <person name="Goltsman E."/>
            <person name="Auger S."/>
            <person name="Galleron N."/>
            <person name="Segurens B."/>
            <person name="Dossat C."/>
            <person name="Land M.L."/>
            <person name="Broussolle V."/>
            <person name="Brillard J."/>
            <person name="Guinebretiere M.-H."/>
            <person name="Sanchis V."/>
            <person name="Nguen-the C."/>
            <person name="Lereclus D."/>
            <person name="Richardson P."/>
            <person name="Wincker P."/>
            <person name="Weissenbach J."/>
            <person name="Ehrlich S.D."/>
            <person name="Sorokin A."/>
        </authorList>
    </citation>
    <scope>NUCLEOTIDE SEQUENCE [LARGE SCALE GENOMIC DNA]</scope>
    <source>
        <strain>DSM 22905 / CIP 110041 / 391-98 / NVH 391-98</strain>
    </source>
</reference>
<organism>
    <name type="scientific">Bacillus cytotoxicus (strain DSM 22905 / CIP 110041 / 391-98 / NVH 391-98)</name>
    <dbReference type="NCBI Taxonomy" id="315749"/>
    <lineage>
        <taxon>Bacteria</taxon>
        <taxon>Bacillati</taxon>
        <taxon>Bacillota</taxon>
        <taxon>Bacilli</taxon>
        <taxon>Bacillales</taxon>
        <taxon>Bacillaceae</taxon>
        <taxon>Bacillus</taxon>
        <taxon>Bacillus cereus group</taxon>
    </lineage>
</organism>
<comment type="function">
    <text evidence="1">Catalyzes the transfer of the enolpyruvyl moiety of phosphoenolpyruvate (PEP) to the 5-hydroxyl of shikimate-3-phosphate (S3P) to produce enolpyruvyl shikimate-3-phosphate and inorganic phosphate.</text>
</comment>
<comment type="catalytic activity">
    <reaction evidence="1">
        <text>3-phosphoshikimate + phosphoenolpyruvate = 5-O-(1-carboxyvinyl)-3-phosphoshikimate + phosphate</text>
        <dbReference type="Rhea" id="RHEA:21256"/>
        <dbReference type="ChEBI" id="CHEBI:43474"/>
        <dbReference type="ChEBI" id="CHEBI:57701"/>
        <dbReference type="ChEBI" id="CHEBI:58702"/>
        <dbReference type="ChEBI" id="CHEBI:145989"/>
        <dbReference type="EC" id="2.5.1.19"/>
    </reaction>
    <physiologicalReaction direction="left-to-right" evidence="1">
        <dbReference type="Rhea" id="RHEA:21257"/>
    </physiologicalReaction>
</comment>
<comment type="pathway">
    <text evidence="1">Metabolic intermediate biosynthesis; chorismate biosynthesis; chorismate from D-erythrose 4-phosphate and phosphoenolpyruvate: step 6/7.</text>
</comment>
<comment type="subunit">
    <text evidence="1">Monomer.</text>
</comment>
<comment type="subcellular location">
    <subcellularLocation>
        <location evidence="1">Cytoplasm</location>
    </subcellularLocation>
</comment>
<comment type="similarity">
    <text evidence="1">Belongs to the EPSP synthase family.</text>
</comment>
<proteinExistence type="inferred from homology"/>
<evidence type="ECO:0000255" key="1">
    <source>
        <dbReference type="HAMAP-Rule" id="MF_00210"/>
    </source>
</evidence>
<feature type="chain" id="PRO_0000325331" description="3-phosphoshikimate 1-carboxyvinyltransferase">
    <location>
        <begin position="1"/>
        <end position="424"/>
    </location>
</feature>
<feature type="active site" description="Proton acceptor" evidence="1">
    <location>
        <position position="313"/>
    </location>
</feature>
<feature type="binding site" evidence="1">
    <location>
        <position position="20"/>
    </location>
    <ligand>
        <name>3-phosphoshikimate</name>
        <dbReference type="ChEBI" id="CHEBI:145989"/>
    </ligand>
</feature>
<feature type="binding site" evidence="1">
    <location>
        <position position="20"/>
    </location>
    <ligand>
        <name>phosphoenolpyruvate</name>
        <dbReference type="ChEBI" id="CHEBI:58702"/>
    </ligand>
</feature>
<feature type="binding site" evidence="1">
    <location>
        <position position="21"/>
    </location>
    <ligand>
        <name>3-phosphoshikimate</name>
        <dbReference type="ChEBI" id="CHEBI:145989"/>
    </ligand>
</feature>
<feature type="binding site" evidence="1">
    <location>
        <position position="25"/>
    </location>
    <ligand>
        <name>3-phosphoshikimate</name>
        <dbReference type="ChEBI" id="CHEBI:145989"/>
    </ligand>
</feature>
<feature type="binding site" evidence="1">
    <location>
        <position position="92"/>
    </location>
    <ligand>
        <name>phosphoenolpyruvate</name>
        <dbReference type="ChEBI" id="CHEBI:58702"/>
    </ligand>
</feature>
<feature type="binding site" evidence="1">
    <location>
        <position position="120"/>
    </location>
    <ligand>
        <name>phosphoenolpyruvate</name>
        <dbReference type="ChEBI" id="CHEBI:58702"/>
    </ligand>
</feature>
<feature type="binding site" evidence="1">
    <location>
        <position position="165"/>
    </location>
    <ligand>
        <name>3-phosphoshikimate</name>
        <dbReference type="ChEBI" id="CHEBI:145989"/>
    </ligand>
</feature>
<feature type="binding site" evidence="1">
    <location>
        <position position="167"/>
    </location>
    <ligand>
        <name>3-phosphoshikimate</name>
        <dbReference type="ChEBI" id="CHEBI:145989"/>
    </ligand>
</feature>
<feature type="binding site" evidence="1">
    <location>
        <position position="167"/>
    </location>
    <ligand>
        <name>phosphoenolpyruvate</name>
        <dbReference type="ChEBI" id="CHEBI:58702"/>
    </ligand>
</feature>
<feature type="binding site" evidence="1">
    <location>
        <position position="313"/>
    </location>
    <ligand>
        <name>3-phosphoshikimate</name>
        <dbReference type="ChEBI" id="CHEBI:145989"/>
    </ligand>
</feature>
<feature type="binding site" evidence="1">
    <location>
        <position position="340"/>
    </location>
    <ligand>
        <name>3-phosphoshikimate</name>
        <dbReference type="ChEBI" id="CHEBI:145989"/>
    </ligand>
</feature>
<feature type="binding site" evidence="1">
    <location>
        <position position="344"/>
    </location>
    <ligand>
        <name>phosphoenolpyruvate</name>
        <dbReference type="ChEBI" id="CHEBI:58702"/>
    </ligand>
</feature>
<feature type="binding site" evidence="1">
    <location>
        <position position="386"/>
    </location>
    <ligand>
        <name>phosphoenolpyruvate</name>
        <dbReference type="ChEBI" id="CHEBI:58702"/>
    </ligand>
</feature>
<keyword id="KW-0028">Amino-acid biosynthesis</keyword>
<keyword id="KW-0057">Aromatic amino acid biosynthesis</keyword>
<keyword id="KW-0963">Cytoplasm</keyword>
<keyword id="KW-0808">Transferase</keyword>
<gene>
    <name evidence="1" type="primary">aroA</name>
    <name type="ordered locus">Bcer98_1242</name>
</gene>
<protein>
    <recommendedName>
        <fullName evidence="1">3-phosphoshikimate 1-carboxyvinyltransferase</fullName>
        <ecNumber evidence="1">2.5.1.19</ecNumber>
    </recommendedName>
    <alternativeName>
        <fullName evidence="1">5-enolpyruvylshikimate-3-phosphate synthase</fullName>
        <shortName evidence="1">EPSP synthase</shortName>
        <shortName evidence="1">EPSPS</shortName>
    </alternativeName>
</protein>
<accession>A7GN56</accession>